<comment type="function">
    <text evidence="1">Plays a major role in protein secretion by helping the post-translocational extracellular folding of several secreted proteins.</text>
</comment>
<comment type="catalytic activity">
    <reaction>
        <text>[protein]-peptidylproline (omega=180) = [protein]-peptidylproline (omega=0)</text>
        <dbReference type="Rhea" id="RHEA:16237"/>
        <dbReference type="Rhea" id="RHEA-COMP:10747"/>
        <dbReference type="Rhea" id="RHEA-COMP:10748"/>
        <dbReference type="ChEBI" id="CHEBI:83833"/>
        <dbReference type="ChEBI" id="CHEBI:83834"/>
        <dbReference type="EC" id="5.2.1.8"/>
    </reaction>
</comment>
<comment type="subcellular location">
    <subcellularLocation>
        <location evidence="3">Cell membrane</location>
        <topology evidence="3">Lipid-anchor</topology>
    </subcellularLocation>
</comment>
<comment type="similarity">
    <text evidence="3">Belongs to the PrsA family.</text>
</comment>
<dbReference type="EC" id="5.2.1.8"/>
<dbReference type="EMBL" id="AE016877">
    <property type="protein sequence ID" value="AAP08148.1"/>
    <property type="molecule type" value="Genomic_DNA"/>
</dbReference>
<dbReference type="RefSeq" id="NP_830947.1">
    <property type="nucleotide sequence ID" value="NC_004722.1"/>
</dbReference>
<dbReference type="SMR" id="Q81GN0"/>
<dbReference type="STRING" id="226900.BC_1161"/>
<dbReference type="KEGG" id="bce:BC1161"/>
<dbReference type="PATRIC" id="fig|226900.8.peg.1125"/>
<dbReference type="HOGENOM" id="CLU_034646_6_1_9"/>
<dbReference type="OrthoDB" id="14196at2"/>
<dbReference type="Proteomes" id="UP000001417">
    <property type="component" value="Chromosome"/>
</dbReference>
<dbReference type="GO" id="GO:0005886">
    <property type="term" value="C:plasma membrane"/>
    <property type="evidence" value="ECO:0007669"/>
    <property type="project" value="UniProtKB-SubCell"/>
</dbReference>
<dbReference type="GO" id="GO:0003755">
    <property type="term" value="F:peptidyl-prolyl cis-trans isomerase activity"/>
    <property type="evidence" value="ECO:0007669"/>
    <property type="project" value="UniProtKB-UniRule"/>
</dbReference>
<dbReference type="GO" id="GO:0006457">
    <property type="term" value="P:protein folding"/>
    <property type="evidence" value="ECO:0007669"/>
    <property type="project" value="UniProtKB-UniRule"/>
</dbReference>
<dbReference type="FunFam" id="3.10.50.40:FF:000033">
    <property type="entry name" value="Foldase protein PrsA"/>
    <property type="match status" value="1"/>
</dbReference>
<dbReference type="Gene3D" id="3.10.50.40">
    <property type="match status" value="1"/>
</dbReference>
<dbReference type="HAMAP" id="MF_01145">
    <property type="entry name" value="Foldase_PrsA"/>
    <property type="match status" value="1"/>
</dbReference>
<dbReference type="InterPro" id="IPR023059">
    <property type="entry name" value="Foldase_PrsA"/>
</dbReference>
<dbReference type="InterPro" id="IPR046357">
    <property type="entry name" value="PPIase_dom_sf"/>
</dbReference>
<dbReference type="InterPro" id="IPR000297">
    <property type="entry name" value="PPIase_PpiC"/>
</dbReference>
<dbReference type="InterPro" id="IPR023058">
    <property type="entry name" value="PPIase_PpiC_CS"/>
</dbReference>
<dbReference type="InterPro" id="IPR050245">
    <property type="entry name" value="PrsA_foldase"/>
</dbReference>
<dbReference type="InterPro" id="IPR027304">
    <property type="entry name" value="Trigger_fact/SurA_dom_sf"/>
</dbReference>
<dbReference type="NCBIfam" id="NF002827">
    <property type="entry name" value="PRK03002.1"/>
    <property type="match status" value="1"/>
</dbReference>
<dbReference type="PANTHER" id="PTHR47245:SF1">
    <property type="entry name" value="FOLDASE PROTEIN PRSA"/>
    <property type="match status" value="1"/>
</dbReference>
<dbReference type="PANTHER" id="PTHR47245">
    <property type="entry name" value="PEPTIDYLPROLYL ISOMERASE"/>
    <property type="match status" value="1"/>
</dbReference>
<dbReference type="Pfam" id="PF00639">
    <property type="entry name" value="Rotamase"/>
    <property type="match status" value="1"/>
</dbReference>
<dbReference type="SUPFAM" id="SSF54534">
    <property type="entry name" value="FKBP-like"/>
    <property type="match status" value="1"/>
</dbReference>
<dbReference type="SUPFAM" id="SSF109998">
    <property type="entry name" value="Triger factor/SurA peptide-binding domain-like"/>
    <property type="match status" value="1"/>
</dbReference>
<dbReference type="PROSITE" id="PS01096">
    <property type="entry name" value="PPIC_PPIASE_1"/>
    <property type="match status" value="1"/>
</dbReference>
<dbReference type="PROSITE" id="PS50198">
    <property type="entry name" value="PPIC_PPIASE_2"/>
    <property type="match status" value="1"/>
</dbReference>
<dbReference type="PROSITE" id="PS51257">
    <property type="entry name" value="PROKAR_LIPOPROTEIN"/>
    <property type="match status" value="1"/>
</dbReference>
<accession>Q81GN0</accession>
<name>PRSA2_BACCR</name>
<reference key="1">
    <citation type="journal article" date="2003" name="Nature">
        <title>Genome sequence of Bacillus cereus and comparative analysis with Bacillus anthracis.</title>
        <authorList>
            <person name="Ivanova N."/>
            <person name="Sorokin A."/>
            <person name="Anderson I."/>
            <person name="Galleron N."/>
            <person name="Candelon B."/>
            <person name="Kapatral V."/>
            <person name="Bhattacharyya A."/>
            <person name="Reznik G."/>
            <person name="Mikhailova N."/>
            <person name="Lapidus A."/>
            <person name="Chu L."/>
            <person name="Mazur M."/>
            <person name="Goltsman E."/>
            <person name="Larsen N."/>
            <person name="D'Souza M."/>
            <person name="Walunas T."/>
            <person name="Grechkin Y."/>
            <person name="Pusch G."/>
            <person name="Haselkorn R."/>
            <person name="Fonstein M."/>
            <person name="Ehrlich S.D."/>
            <person name="Overbeek R."/>
            <person name="Kyrpides N.C."/>
        </authorList>
    </citation>
    <scope>NUCLEOTIDE SEQUENCE [LARGE SCALE GENOMIC DNA]</scope>
    <source>
        <strain>ATCC 14579 / DSM 31 / CCUG 7414 / JCM 2152 / NBRC 15305 / NCIMB 9373 / NCTC 2599 / NRRL B-3711</strain>
    </source>
</reference>
<protein>
    <recommendedName>
        <fullName>Foldase protein PrsA 2</fullName>
        <ecNumber>5.2.1.8</ecNumber>
    </recommendedName>
</protein>
<keyword id="KW-1003">Cell membrane</keyword>
<keyword id="KW-0413">Isomerase</keyword>
<keyword id="KW-0449">Lipoprotein</keyword>
<keyword id="KW-0472">Membrane</keyword>
<keyword id="KW-0564">Palmitate</keyword>
<keyword id="KW-1185">Reference proteome</keyword>
<keyword id="KW-0697">Rotamase</keyword>
<keyword id="KW-0732">Signal</keyword>
<gene>
    <name type="primary">prsA2</name>
    <name type="ordered locus">BC_1161</name>
</gene>
<sequence length="285" mass="32235">MRGKHIFIITALISILMLSACGQKNGSATVATATDSTITKDNFEKQLKDRYGKDMLYEMMAQDVITKKYKVPDEEVNKEVEKVKKQYGDQFKKVLENYGLKDEEDFKNQIKFKLAMNEAIKKSITEKDVKDHYKPEIKASHILVSDENEAKEIKSKLDAGASFEELAKQESQDLLSKDKGGDLGYFNSGTMAPEFETAAYKLNVGQISNPVKSSNGYHVIKLTDKKALKPYDEVKDSIRKNLEEERTADPVFSKKLLQEELKKANIKINDSDLKDTFTLVSPQGN</sequence>
<proteinExistence type="inferred from homology"/>
<evidence type="ECO:0000250" key="1"/>
<evidence type="ECO:0000255" key="2"/>
<evidence type="ECO:0000305" key="3"/>
<organism>
    <name type="scientific">Bacillus cereus (strain ATCC 14579 / DSM 31 / CCUG 7414 / JCM 2152 / NBRC 15305 / NCIMB 9373 / NCTC 2599 / NRRL B-3711)</name>
    <dbReference type="NCBI Taxonomy" id="226900"/>
    <lineage>
        <taxon>Bacteria</taxon>
        <taxon>Bacillati</taxon>
        <taxon>Bacillota</taxon>
        <taxon>Bacilli</taxon>
        <taxon>Bacillales</taxon>
        <taxon>Bacillaceae</taxon>
        <taxon>Bacillus</taxon>
        <taxon>Bacillus cereus group</taxon>
    </lineage>
</organism>
<feature type="signal peptide" evidence="2">
    <location>
        <begin position="1"/>
        <end position="20"/>
    </location>
</feature>
<feature type="chain" id="PRO_0000029295" description="Foldase protein PrsA 2">
    <location>
        <begin position="21"/>
        <end position="285"/>
    </location>
</feature>
<feature type="domain" description="PpiC">
    <location>
        <begin position="134"/>
        <end position="224"/>
    </location>
</feature>
<feature type="lipid moiety-binding region" description="N-palmitoyl cysteine" evidence="2">
    <location>
        <position position="21"/>
    </location>
</feature>
<feature type="lipid moiety-binding region" description="S-diacylglycerol cysteine" evidence="2">
    <location>
        <position position="21"/>
    </location>
</feature>